<dbReference type="EMBL" id="CP001087">
    <property type="protein sequence ID" value="ACN16694.1"/>
    <property type="molecule type" value="Genomic_DNA"/>
</dbReference>
<dbReference type="RefSeq" id="WP_015905444.1">
    <property type="nucleotide sequence ID" value="NC_012108.1"/>
</dbReference>
<dbReference type="SMR" id="C0Q9X6"/>
<dbReference type="STRING" id="177437.HRM2_36290"/>
<dbReference type="KEGG" id="dat:HRM2_36290"/>
<dbReference type="eggNOG" id="COG0049">
    <property type="taxonomic scope" value="Bacteria"/>
</dbReference>
<dbReference type="HOGENOM" id="CLU_072226_1_1_7"/>
<dbReference type="OrthoDB" id="9807653at2"/>
<dbReference type="Proteomes" id="UP000000442">
    <property type="component" value="Chromosome"/>
</dbReference>
<dbReference type="GO" id="GO:0015935">
    <property type="term" value="C:small ribosomal subunit"/>
    <property type="evidence" value="ECO:0007669"/>
    <property type="project" value="InterPro"/>
</dbReference>
<dbReference type="GO" id="GO:0019843">
    <property type="term" value="F:rRNA binding"/>
    <property type="evidence" value="ECO:0007669"/>
    <property type="project" value="UniProtKB-UniRule"/>
</dbReference>
<dbReference type="GO" id="GO:0003735">
    <property type="term" value="F:structural constituent of ribosome"/>
    <property type="evidence" value="ECO:0007669"/>
    <property type="project" value="InterPro"/>
</dbReference>
<dbReference type="GO" id="GO:0000049">
    <property type="term" value="F:tRNA binding"/>
    <property type="evidence" value="ECO:0007669"/>
    <property type="project" value="UniProtKB-UniRule"/>
</dbReference>
<dbReference type="GO" id="GO:0006412">
    <property type="term" value="P:translation"/>
    <property type="evidence" value="ECO:0007669"/>
    <property type="project" value="UniProtKB-UniRule"/>
</dbReference>
<dbReference type="CDD" id="cd14869">
    <property type="entry name" value="uS7_Bacteria"/>
    <property type="match status" value="1"/>
</dbReference>
<dbReference type="FunFam" id="1.10.455.10:FF:000001">
    <property type="entry name" value="30S ribosomal protein S7"/>
    <property type="match status" value="1"/>
</dbReference>
<dbReference type="Gene3D" id="1.10.455.10">
    <property type="entry name" value="Ribosomal protein S7 domain"/>
    <property type="match status" value="1"/>
</dbReference>
<dbReference type="HAMAP" id="MF_00480_B">
    <property type="entry name" value="Ribosomal_uS7_B"/>
    <property type="match status" value="1"/>
</dbReference>
<dbReference type="InterPro" id="IPR000235">
    <property type="entry name" value="Ribosomal_uS7"/>
</dbReference>
<dbReference type="InterPro" id="IPR005717">
    <property type="entry name" value="Ribosomal_uS7_bac/org-type"/>
</dbReference>
<dbReference type="InterPro" id="IPR020606">
    <property type="entry name" value="Ribosomal_uS7_CS"/>
</dbReference>
<dbReference type="InterPro" id="IPR023798">
    <property type="entry name" value="Ribosomal_uS7_dom"/>
</dbReference>
<dbReference type="InterPro" id="IPR036823">
    <property type="entry name" value="Ribosomal_uS7_dom_sf"/>
</dbReference>
<dbReference type="NCBIfam" id="TIGR01029">
    <property type="entry name" value="rpsG_bact"/>
    <property type="match status" value="1"/>
</dbReference>
<dbReference type="PANTHER" id="PTHR11205">
    <property type="entry name" value="RIBOSOMAL PROTEIN S7"/>
    <property type="match status" value="1"/>
</dbReference>
<dbReference type="Pfam" id="PF00177">
    <property type="entry name" value="Ribosomal_S7"/>
    <property type="match status" value="1"/>
</dbReference>
<dbReference type="PIRSF" id="PIRSF002122">
    <property type="entry name" value="RPS7p_RPS7a_RPS5e_RPS7o"/>
    <property type="match status" value="1"/>
</dbReference>
<dbReference type="SUPFAM" id="SSF47973">
    <property type="entry name" value="Ribosomal protein S7"/>
    <property type="match status" value="1"/>
</dbReference>
<dbReference type="PROSITE" id="PS00052">
    <property type="entry name" value="RIBOSOMAL_S7"/>
    <property type="match status" value="1"/>
</dbReference>
<reference key="1">
    <citation type="journal article" date="2009" name="Environ. Microbiol.">
        <title>Genome sequence of Desulfobacterium autotrophicum HRM2, a marine sulfate reducer oxidizing organic carbon completely to carbon dioxide.</title>
        <authorList>
            <person name="Strittmatter A.W."/>
            <person name="Liesegang H."/>
            <person name="Rabus R."/>
            <person name="Decker I."/>
            <person name="Amann J."/>
            <person name="Andres S."/>
            <person name="Henne A."/>
            <person name="Fricke W.F."/>
            <person name="Martinez-Arias R."/>
            <person name="Bartels D."/>
            <person name="Goesmann A."/>
            <person name="Krause L."/>
            <person name="Puehler A."/>
            <person name="Klenk H.P."/>
            <person name="Richter M."/>
            <person name="Schuler M."/>
            <person name="Gloeckner F.O."/>
            <person name="Meyerdierks A."/>
            <person name="Gottschalk G."/>
            <person name="Amann R."/>
        </authorList>
    </citation>
    <scope>NUCLEOTIDE SEQUENCE [LARGE SCALE GENOMIC DNA]</scope>
    <source>
        <strain>ATCC 43914 / DSM 3382 / VKM B-1955 / HRM2</strain>
    </source>
</reference>
<protein>
    <recommendedName>
        <fullName evidence="1">Small ribosomal subunit protein uS7</fullName>
    </recommendedName>
    <alternativeName>
        <fullName evidence="2">30S ribosomal protein S7</fullName>
    </alternativeName>
</protein>
<comment type="function">
    <text evidence="1">One of the primary rRNA binding proteins, it binds directly to 16S rRNA where it nucleates assembly of the head domain of the 30S subunit. Is located at the subunit interface close to the decoding center, probably blocks exit of the E-site tRNA.</text>
</comment>
<comment type="subunit">
    <text evidence="1">Part of the 30S ribosomal subunit. Contacts proteins S9 and S11.</text>
</comment>
<comment type="similarity">
    <text evidence="1">Belongs to the universal ribosomal protein uS7 family.</text>
</comment>
<gene>
    <name evidence="1" type="primary">rpsG</name>
    <name type="ordered locus">HRM2_36290</name>
</gene>
<accession>C0Q9X6</accession>
<sequence length="155" mass="17524">MARKKIVSGHLKNAISKDEHISVKFVNCIMRDGKKSVAEKVFKDAMELVEEKLGESSLKVFEKAIGNIRPSVEVKSRRVGGSTYQVPTEIKSSRQTALAFRWLLRFSRSRSEKGLSNKLAAELLDAYNERGGAVKKKEDTHKMAEANKAFAHFRW</sequence>
<feature type="chain" id="PRO_1000206399" description="Small ribosomal subunit protein uS7">
    <location>
        <begin position="1"/>
        <end position="155"/>
    </location>
</feature>
<organism>
    <name type="scientific">Desulforapulum autotrophicum (strain ATCC 43914 / DSM 3382 / VKM B-1955 / HRM2)</name>
    <name type="common">Desulfobacterium autotrophicum</name>
    <dbReference type="NCBI Taxonomy" id="177437"/>
    <lineage>
        <taxon>Bacteria</taxon>
        <taxon>Pseudomonadati</taxon>
        <taxon>Thermodesulfobacteriota</taxon>
        <taxon>Desulfobacteria</taxon>
        <taxon>Desulfobacterales</taxon>
        <taxon>Desulfobacteraceae</taxon>
        <taxon>Desulforapulum</taxon>
    </lineage>
</organism>
<evidence type="ECO:0000255" key="1">
    <source>
        <dbReference type="HAMAP-Rule" id="MF_00480"/>
    </source>
</evidence>
<evidence type="ECO:0000305" key="2"/>
<keyword id="KW-1185">Reference proteome</keyword>
<keyword id="KW-0687">Ribonucleoprotein</keyword>
<keyword id="KW-0689">Ribosomal protein</keyword>
<keyword id="KW-0694">RNA-binding</keyword>
<keyword id="KW-0699">rRNA-binding</keyword>
<keyword id="KW-0820">tRNA-binding</keyword>
<name>RS7_DESAH</name>
<proteinExistence type="inferred from homology"/>